<protein>
    <recommendedName>
        <fullName evidence="1">CTP synthase</fullName>
        <ecNumber evidence="1">6.3.4.2</ecNumber>
    </recommendedName>
    <alternativeName>
        <fullName evidence="1">Cytidine 5'-triphosphate synthase</fullName>
    </alternativeName>
    <alternativeName>
        <fullName evidence="1">Cytidine triphosphate synthetase</fullName>
        <shortName evidence="1">CTP synthetase</shortName>
        <shortName evidence="1">CTPS</shortName>
    </alternativeName>
    <alternativeName>
        <fullName evidence="1">UTP--ammonia ligase</fullName>
    </alternativeName>
</protein>
<organism>
    <name type="scientific">Marinobacter nauticus (strain ATCC 700491 / DSM 11845 / VT8)</name>
    <name type="common">Marinobacter aquaeolei</name>
    <dbReference type="NCBI Taxonomy" id="351348"/>
    <lineage>
        <taxon>Bacteria</taxon>
        <taxon>Pseudomonadati</taxon>
        <taxon>Pseudomonadota</taxon>
        <taxon>Gammaproteobacteria</taxon>
        <taxon>Pseudomonadales</taxon>
        <taxon>Marinobacteraceae</taxon>
        <taxon>Marinobacter</taxon>
    </lineage>
</organism>
<reference key="1">
    <citation type="journal article" date="2011" name="Appl. Environ. Microbiol.">
        <title>Genomic potential of Marinobacter aquaeolei, a biogeochemical 'opportunitroph'.</title>
        <authorList>
            <person name="Singer E."/>
            <person name="Webb E.A."/>
            <person name="Nelson W.C."/>
            <person name="Heidelberg J.F."/>
            <person name="Ivanova N."/>
            <person name="Pati A."/>
            <person name="Edwards K.J."/>
        </authorList>
    </citation>
    <scope>NUCLEOTIDE SEQUENCE [LARGE SCALE GENOMIC DNA]</scope>
    <source>
        <strain>ATCC 700491 / DSM 11845 / VT8</strain>
    </source>
</reference>
<sequence length="542" mass="60062">MTRYIFVTGGVVSSLGKGIASASLAAILEARGLKVTILKLDPYINVDPGTMSPFQHGEVFVTEDGAETDLDLGHYERFIRTPMTKRNNFTTGRVYEEVIRKERRGDYLGGTVQVIPHITDEIKRRVVEGAAGADVALIEVGGTVGDIESLPFLEACRQLKVEVGSQRALFMHLTLVPYIATAGEIKTKPTQHSVKEMRSIGLQPDILLCRSEHEVDASSRRKIALFTNVEERAVIPMQDARSIYAIPRMLHEYGLDQLVIERFGLDAREADLSEWDAVVDSLMNPQDEVTIAMVGKYMELLDAYKSLIESLLHAGIKTRTKVNINYIDSEDIERDGTSVLESADAILVPGGFGERGVEGKIRTVQYARENKVPYLGICLGMQVAVIEYARNVAGLKDAHSTEFREHTPEPVVGLITEWLDATGEKEERTEESDLGGTMRLGAQDCVLTEGSTIVGCYGKKTIRERHRHRYEVNNHFLPRLEEAGLQISGRSADGKLVEVVEAPDHPWFVACQFHPEFTSTPRDGHPLFKGFVEAALANKKGS</sequence>
<gene>
    <name evidence="1" type="primary">pyrG</name>
    <name type="ordered locus">Maqu_0919</name>
</gene>
<proteinExistence type="inferred from homology"/>
<feature type="chain" id="PRO_1000139482" description="CTP synthase">
    <location>
        <begin position="1"/>
        <end position="542"/>
    </location>
</feature>
<feature type="domain" description="Glutamine amidotransferase type-1" evidence="1">
    <location>
        <begin position="290"/>
        <end position="541"/>
    </location>
</feature>
<feature type="region of interest" description="Amidoligase domain" evidence="1">
    <location>
        <begin position="1"/>
        <end position="265"/>
    </location>
</feature>
<feature type="active site" description="Nucleophile; for glutamine hydrolysis" evidence="1">
    <location>
        <position position="378"/>
    </location>
</feature>
<feature type="active site" evidence="1">
    <location>
        <position position="514"/>
    </location>
</feature>
<feature type="active site" evidence="1">
    <location>
        <position position="516"/>
    </location>
</feature>
<feature type="binding site" evidence="1">
    <location>
        <position position="13"/>
    </location>
    <ligand>
        <name>CTP</name>
        <dbReference type="ChEBI" id="CHEBI:37563"/>
        <note>allosteric inhibitor</note>
    </ligand>
</feature>
<feature type="binding site" evidence="1">
    <location>
        <position position="13"/>
    </location>
    <ligand>
        <name>UTP</name>
        <dbReference type="ChEBI" id="CHEBI:46398"/>
    </ligand>
</feature>
<feature type="binding site" evidence="1">
    <location>
        <begin position="14"/>
        <end position="19"/>
    </location>
    <ligand>
        <name>ATP</name>
        <dbReference type="ChEBI" id="CHEBI:30616"/>
    </ligand>
</feature>
<feature type="binding site" evidence="1">
    <location>
        <position position="71"/>
    </location>
    <ligand>
        <name>ATP</name>
        <dbReference type="ChEBI" id="CHEBI:30616"/>
    </ligand>
</feature>
<feature type="binding site" evidence="1">
    <location>
        <position position="71"/>
    </location>
    <ligand>
        <name>Mg(2+)</name>
        <dbReference type="ChEBI" id="CHEBI:18420"/>
    </ligand>
</feature>
<feature type="binding site" evidence="1">
    <location>
        <position position="139"/>
    </location>
    <ligand>
        <name>Mg(2+)</name>
        <dbReference type="ChEBI" id="CHEBI:18420"/>
    </ligand>
</feature>
<feature type="binding site" evidence="1">
    <location>
        <begin position="146"/>
        <end position="148"/>
    </location>
    <ligand>
        <name>CTP</name>
        <dbReference type="ChEBI" id="CHEBI:37563"/>
        <note>allosteric inhibitor</note>
    </ligand>
</feature>
<feature type="binding site" evidence="1">
    <location>
        <begin position="186"/>
        <end position="191"/>
    </location>
    <ligand>
        <name>CTP</name>
        <dbReference type="ChEBI" id="CHEBI:37563"/>
        <note>allosteric inhibitor</note>
    </ligand>
</feature>
<feature type="binding site" evidence="1">
    <location>
        <begin position="186"/>
        <end position="191"/>
    </location>
    <ligand>
        <name>UTP</name>
        <dbReference type="ChEBI" id="CHEBI:46398"/>
    </ligand>
</feature>
<feature type="binding site" evidence="1">
    <location>
        <position position="222"/>
    </location>
    <ligand>
        <name>CTP</name>
        <dbReference type="ChEBI" id="CHEBI:37563"/>
        <note>allosteric inhibitor</note>
    </ligand>
</feature>
<feature type="binding site" evidence="1">
    <location>
        <position position="222"/>
    </location>
    <ligand>
        <name>UTP</name>
        <dbReference type="ChEBI" id="CHEBI:46398"/>
    </ligand>
</feature>
<feature type="binding site" evidence="1">
    <location>
        <position position="351"/>
    </location>
    <ligand>
        <name>L-glutamine</name>
        <dbReference type="ChEBI" id="CHEBI:58359"/>
    </ligand>
</feature>
<feature type="binding site" evidence="1">
    <location>
        <begin position="379"/>
        <end position="382"/>
    </location>
    <ligand>
        <name>L-glutamine</name>
        <dbReference type="ChEBI" id="CHEBI:58359"/>
    </ligand>
</feature>
<feature type="binding site" evidence="1">
    <location>
        <position position="402"/>
    </location>
    <ligand>
        <name>L-glutamine</name>
        <dbReference type="ChEBI" id="CHEBI:58359"/>
    </ligand>
</feature>
<feature type="binding site" evidence="1">
    <location>
        <position position="469"/>
    </location>
    <ligand>
        <name>L-glutamine</name>
        <dbReference type="ChEBI" id="CHEBI:58359"/>
    </ligand>
</feature>
<accession>A1TZ46</accession>
<evidence type="ECO:0000255" key="1">
    <source>
        <dbReference type="HAMAP-Rule" id="MF_01227"/>
    </source>
</evidence>
<comment type="function">
    <text evidence="1">Catalyzes the ATP-dependent amination of UTP to CTP with either L-glutamine or ammonia as the source of nitrogen. Regulates intracellular CTP levels through interactions with the four ribonucleotide triphosphates.</text>
</comment>
<comment type="catalytic activity">
    <reaction evidence="1">
        <text>UTP + L-glutamine + ATP + H2O = CTP + L-glutamate + ADP + phosphate + 2 H(+)</text>
        <dbReference type="Rhea" id="RHEA:26426"/>
        <dbReference type="ChEBI" id="CHEBI:15377"/>
        <dbReference type="ChEBI" id="CHEBI:15378"/>
        <dbReference type="ChEBI" id="CHEBI:29985"/>
        <dbReference type="ChEBI" id="CHEBI:30616"/>
        <dbReference type="ChEBI" id="CHEBI:37563"/>
        <dbReference type="ChEBI" id="CHEBI:43474"/>
        <dbReference type="ChEBI" id="CHEBI:46398"/>
        <dbReference type="ChEBI" id="CHEBI:58359"/>
        <dbReference type="ChEBI" id="CHEBI:456216"/>
        <dbReference type="EC" id="6.3.4.2"/>
    </reaction>
</comment>
<comment type="catalytic activity">
    <reaction evidence="1">
        <text>L-glutamine + H2O = L-glutamate + NH4(+)</text>
        <dbReference type="Rhea" id="RHEA:15889"/>
        <dbReference type="ChEBI" id="CHEBI:15377"/>
        <dbReference type="ChEBI" id="CHEBI:28938"/>
        <dbReference type="ChEBI" id="CHEBI:29985"/>
        <dbReference type="ChEBI" id="CHEBI:58359"/>
    </reaction>
</comment>
<comment type="catalytic activity">
    <reaction evidence="1">
        <text>UTP + NH4(+) + ATP = CTP + ADP + phosphate + 2 H(+)</text>
        <dbReference type="Rhea" id="RHEA:16597"/>
        <dbReference type="ChEBI" id="CHEBI:15378"/>
        <dbReference type="ChEBI" id="CHEBI:28938"/>
        <dbReference type="ChEBI" id="CHEBI:30616"/>
        <dbReference type="ChEBI" id="CHEBI:37563"/>
        <dbReference type="ChEBI" id="CHEBI:43474"/>
        <dbReference type="ChEBI" id="CHEBI:46398"/>
        <dbReference type="ChEBI" id="CHEBI:456216"/>
    </reaction>
</comment>
<comment type="activity regulation">
    <text evidence="1">Allosterically activated by GTP, when glutamine is the substrate; GTP has no effect on the reaction when ammonia is the substrate. The allosteric effector GTP functions by stabilizing the protein conformation that binds the tetrahedral intermediate(s) formed during glutamine hydrolysis. Inhibited by the product CTP, via allosteric rather than competitive inhibition.</text>
</comment>
<comment type="pathway">
    <text evidence="1">Pyrimidine metabolism; CTP biosynthesis via de novo pathway; CTP from UDP: step 2/2.</text>
</comment>
<comment type="subunit">
    <text evidence="1">Homotetramer.</text>
</comment>
<comment type="miscellaneous">
    <text evidence="1">CTPSs have evolved a hybrid strategy for distinguishing between UTP and CTP. The overlapping regions of the product feedback inhibitory and substrate sites recognize a common feature in both compounds, the triphosphate moiety. To differentiate isosteric substrate and product pyrimidine rings, an additional pocket far from the expected kinase/ligase catalytic site, specifically recognizes the cytosine and ribose portions of the product inhibitor.</text>
</comment>
<comment type="similarity">
    <text evidence="1">Belongs to the CTP synthase family.</text>
</comment>
<keyword id="KW-0067">ATP-binding</keyword>
<keyword id="KW-0315">Glutamine amidotransferase</keyword>
<keyword id="KW-0436">Ligase</keyword>
<keyword id="KW-0460">Magnesium</keyword>
<keyword id="KW-0479">Metal-binding</keyword>
<keyword id="KW-0547">Nucleotide-binding</keyword>
<keyword id="KW-0665">Pyrimidine biosynthesis</keyword>
<dbReference type="EC" id="6.3.4.2" evidence="1"/>
<dbReference type="EMBL" id="CP000514">
    <property type="protein sequence ID" value="ABM18015.1"/>
    <property type="molecule type" value="Genomic_DNA"/>
</dbReference>
<dbReference type="RefSeq" id="WP_011784435.1">
    <property type="nucleotide sequence ID" value="NC_008740.1"/>
</dbReference>
<dbReference type="SMR" id="A1TZ46"/>
<dbReference type="STRING" id="351348.Maqu_0919"/>
<dbReference type="KEGG" id="maq:Maqu_0919"/>
<dbReference type="eggNOG" id="COG0504">
    <property type="taxonomic scope" value="Bacteria"/>
</dbReference>
<dbReference type="HOGENOM" id="CLU_011675_5_0_6"/>
<dbReference type="OrthoDB" id="9801107at2"/>
<dbReference type="UniPathway" id="UPA00159">
    <property type="reaction ID" value="UER00277"/>
</dbReference>
<dbReference type="Proteomes" id="UP000000998">
    <property type="component" value="Chromosome"/>
</dbReference>
<dbReference type="GO" id="GO:0005829">
    <property type="term" value="C:cytosol"/>
    <property type="evidence" value="ECO:0007669"/>
    <property type="project" value="TreeGrafter"/>
</dbReference>
<dbReference type="GO" id="GO:0005524">
    <property type="term" value="F:ATP binding"/>
    <property type="evidence" value="ECO:0007669"/>
    <property type="project" value="UniProtKB-KW"/>
</dbReference>
<dbReference type="GO" id="GO:0003883">
    <property type="term" value="F:CTP synthase activity"/>
    <property type="evidence" value="ECO:0007669"/>
    <property type="project" value="UniProtKB-UniRule"/>
</dbReference>
<dbReference type="GO" id="GO:0004359">
    <property type="term" value="F:glutaminase activity"/>
    <property type="evidence" value="ECO:0007669"/>
    <property type="project" value="RHEA"/>
</dbReference>
<dbReference type="GO" id="GO:0042802">
    <property type="term" value="F:identical protein binding"/>
    <property type="evidence" value="ECO:0007669"/>
    <property type="project" value="TreeGrafter"/>
</dbReference>
<dbReference type="GO" id="GO:0046872">
    <property type="term" value="F:metal ion binding"/>
    <property type="evidence" value="ECO:0007669"/>
    <property type="project" value="UniProtKB-KW"/>
</dbReference>
<dbReference type="GO" id="GO:0044210">
    <property type="term" value="P:'de novo' CTP biosynthetic process"/>
    <property type="evidence" value="ECO:0007669"/>
    <property type="project" value="UniProtKB-UniRule"/>
</dbReference>
<dbReference type="GO" id="GO:0019856">
    <property type="term" value="P:pyrimidine nucleobase biosynthetic process"/>
    <property type="evidence" value="ECO:0007669"/>
    <property type="project" value="TreeGrafter"/>
</dbReference>
<dbReference type="CDD" id="cd03113">
    <property type="entry name" value="CTPS_N"/>
    <property type="match status" value="1"/>
</dbReference>
<dbReference type="CDD" id="cd01746">
    <property type="entry name" value="GATase1_CTP_Synthase"/>
    <property type="match status" value="1"/>
</dbReference>
<dbReference type="FunFam" id="3.40.50.300:FF:000009">
    <property type="entry name" value="CTP synthase"/>
    <property type="match status" value="1"/>
</dbReference>
<dbReference type="FunFam" id="3.40.50.880:FF:000002">
    <property type="entry name" value="CTP synthase"/>
    <property type="match status" value="1"/>
</dbReference>
<dbReference type="Gene3D" id="3.40.50.880">
    <property type="match status" value="1"/>
</dbReference>
<dbReference type="Gene3D" id="3.40.50.300">
    <property type="entry name" value="P-loop containing nucleotide triphosphate hydrolases"/>
    <property type="match status" value="1"/>
</dbReference>
<dbReference type="HAMAP" id="MF_01227">
    <property type="entry name" value="PyrG"/>
    <property type="match status" value="1"/>
</dbReference>
<dbReference type="InterPro" id="IPR029062">
    <property type="entry name" value="Class_I_gatase-like"/>
</dbReference>
<dbReference type="InterPro" id="IPR004468">
    <property type="entry name" value="CTP_synthase"/>
</dbReference>
<dbReference type="InterPro" id="IPR017456">
    <property type="entry name" value="CTP_synthase_N"/>
</dbReference>
<dbReference type="InterPro" id="IPR017926">
    <property type="entry name" value="GATASE"/>
</dbReference>
<dbReference type="InterPro" id="IPR033828">
    <property type="entry name" value="GATase1_CTP_Synthase"/>
</dbReference>
<dbReference type="InterPro" id="IPR027417">
    <property type="entry name" value="P-loop_NTPase"/>
</dbReference>
<dbReference type="NCBIfam" id="NF003792">
    <property type="entry name" value="PRK05380.1"/>
    <property type="match status" value="1"/>
</dbReference>
<dbReference type="NCBIfam" id="TIGR00337">
    <property type="entry name" value="PyrG"/>
    <property type="match status" value="1"/>
</dbReference>
<dbReference type="PANTHER" id="PTHR11550">
    <property type="entry name" value="CTP SYNTHASE"/>
    <property type="match status" value="1"/>
</dbReference>
<dbReference type="PANTHER" id="PTHR11550:SF0">
    <property type="entry name" value="CTP SYNTHASE-RELATED"/>
    <property type="match status" value="1"/>
</dbReference>
<dbReference type="Pfam" id="PF06418">
    <property type="entry name" value="CTP_synth_N"/>
    <property type="match status" value="1"/>
</dbReference>
<dbReference type="Pfam" id="PF00117">
    <property type="entry name" value="GATase"/>
    <property type="match status" value="1"/>
</dbReference>
<dbReference type="SUPFAM" id="SSF52317">
    <property type="entry name" value="Class I glutamine amidotransferase-like"/>
    <property type="match status" value="1"/>
</dbReference>
<dbReference type="SUPFAM" id="SSF52540">
    <property type="entry name" value="P-loop containing nucleoside triphosphate hydrolases"/>
    <property type="match status" value="1"/>
</dbReference>
<dbReference type="PROSITE" id="PS51273">
    <property type="entry name" value="GATASE_TYPE_1"/>
    <property type="match status" value="1"/>
</dbReference>
<name>PYRG_MARN8</name>